<name>GLN1B_AQUAE</name>
<proteinExistence type="inferred from homology"/>
<dbReference type="EC" id="6.3.1.2" evidence="4"/>
<dbReference type="EMBL" id="AE000657">
    <property type="protein sequence ID" value="AAC06472.1"/>
    <property type="molecule type" value="Genomic_DNA"/>
</dbReference>
<dbReference type="PIR" id="G70310">
    <property type="entry name" value="G70310"/>
</dbReference>
<dbReference type="RefSeq" id="NP_213074.1">
    <property type="nucleotide sequence ID" value="NC_000918.1"/>
</dbReference>
<dbReference type="RefSeq" id="WP_010880012.1">
    <property type="nucleotide sequence ID" value="NC_000918.1"/>
</dbReference>
<dbReference type="SMR" id="O66514"/>
<dbReference type="FunCoup" id="O66514">
    <property type="interactions" value="447"/>
</dbReference>
<dbReference type="STRING" id="224324.aq_111"/>
<dbReference type="EnsemblBacteria" id="AAC06472">
    <property type="protein sequence ID" value="AAC06472"/>
    <property type="gene ID" value="aq_111"/>
</dbReference>
<dbReference type="KEGG" id="aae:aq_111"/>
<dbReference type="PATRIC" id="fig|224324.8.peg.95"/>
<dbReference type="eggNOG" id="COG0174">
    <property type="taxonomic scope" value="Bacteria"/>
</dbReference>
<dbReference type="HOGENOM" id="CLU_017290_1_2_0"/>
<dbReference type="InParanoid" id="O66514"/>
<dbReference type="OrthoDB" id="9807095at2"/>
<dbReference type="Proteomes" id="UP000000798">
    <property type="component" value="Chromosome"/>
</dbReference>
<dbReference type="GO" id="GO:0005737">
    <property type="term" value="C:cytoplasm"/>
    <property type="evidence" value="ECO:0000318"/>
    <property type="project" value="GO_Central"/>
</dbReference>
<dbReference type="GO" id="GO:0016020">
    <property type="term" value="C:membrane"/>
    <property type="evidence" value="ECO:0000318"/>
    <property type="project" value="GO_Central"/>
</dbReference>
<dbReference type="GO" id="GO:0005524">
    <property type="term" value="F:ATP binding"/>
    <property type="evidence" value="ECO:0007669"/>
    <property type="project" value="UniProtKB-KW"/>
</dbReference>
<dbReference type="GO" id="GO:0004356">
    <property type="term" value="F:glutamine synthetase activity"/>
    <property type="evidence" value="ECO:0000318"/>
    <property type="project" value="GO_Central"/>
</dbReference>
<dbReference type="GO" id="GO:0046872">
    <property type="term" value="F:metal ion binding"/>
    <property type="evidence" value="ECO:0007669"/>
    <property type="project" value="UniProtKB-KW"/>
</dbReference>
<dbReference type="GO" id="GO:0006542">
    <property type="term" value="P:glutamine biosynthetic process"/>
    <property type="evidence" value="ECO:0000318"/>
    <property type="project" value="GO_Central"/>
</dbReference>
<dbReference type="GO" id="GO:0019740">
    <property type="term" value="P:nitrogen utilization"/>
    <property type="evidence" value="ECO:0000318"/>
    <property type="project" value="GO_Central"/>
</dbReference>
<dbReference type="FunFam" id="3.30.590.10:FF:000001">
    <property type="entry name" value="Glutamine synthetase"/>
    <property type="match status" value="1"/>
</dbReference>
<dbReference type="Gene3D" id="3.10.20.70">
    <property type="entry name" value="Glutamine synthetase, N-terminal domain"/>
    <property type="match status" value="1"/>
</dbReference>
<dbReference type="Gene3D" id="3.30.590.10">
    <property type="entry name" value="Glutamine synthetase/guanido kinase, catalytic domain"/>
    <property type="match status" value="1"/>
</dbReference>
<dbReference type="InterPro" id="IPR008147">
    <property type="entry name" value="Gln_synt_N"/>
</dbReference>
<dbReference type="InterPro" id="IPR036651">
    <property type="entry name" value="Gln_synt_N_sf"/>
</dbReference>
<dbReference type="InterPro" id="IPR014746">
    <property type="entry name" value="Gln_synth/guanido_kin_cat_dom"/>
</dbReference>
<dbReference type="InterPro" id="IPR008146">
    <property type="entry name" value="Gln_synth_cat_dom"/>
</dbReference>
<dbReference type="InterPro" id="IPR004809">
    <property type="entry name" value="Gln_synth_I"/>
</dbReference>
<dbReference type="NCBIfam" id="TIGR00653">
    <property type="entry name" value="GlnA"/>
    <property type="match status" value="1"/>
</dbReference>
<dbReference type="PANTHER" id="PTHR43407">
    <property type="entry name" value="GLUTAMINE SYNTHETASE"/>
    <property type="match status" value="1"/>
</dbReference>
<dbReference type="PANTHER" id="PTHR43407:SF1">
    <property type="entry name" value="LENGSIN"/>
    <property type="match status" value="1"/>
</dbReference>
<dbReference type="Pfam" id="PF00120">
    <property type="entry name" value="Gln-synt_C"/>
    <property type="match status" value="1"/>
</dbReference>
<dbReference type="Pfam" id="PF03951">
    <property type="entry name" value="Gln-synt_N"/>
    <property type="match status" value="1"/>
</dbReference>
<dbReference type="SMART" id="SM01230">
    <property type="entry name" value="Gln-synt_C"/>
    <property type="match status" value="1"/>
</dbReference>
<dbReference type="SUPFAM" id="SSF54368">
    <property type="entry name" value="Glutamine synthetase, N-terminal domain"/>
    <property type="match status" value="1"/>
</dbReference>
<dbReference type="SUPFAM" id="SSF55931">
    <property type="entry name" value="Glutamine synthetase/guanido kinase"/>
    <property type="match status" value="1"/>
</dbReference>
<dbReference type="PROSITE" id="PS51986">
    <property type="entry name" value="GS_BETA_GRASP"/>
    <property type="match status" value="1"/>
</dbReference>
<dbReference type="PROSITE" id="PS51987">
    <property type="entry name" value="GS_CATALYTIC"/>
    <property type="match status" value="1"/>
</dbReference>
<evidence type="ECO:0000250" key="1">
    <source>
        <dbReference type="UniProtKB" id="P0A1P6"/>
    </source>
</evidence>
<evidence type="ECO:0000250" key="2">
    <source>
        <dbReference type="UniProtKB" id="P12425"/>
    </source>
</evidence>
<evidence type="ECO:0000250" key="3">
    <source>
        <dbReference type="UniProtKB" id="P77961"/>
    </source>
</evidence>
<evidence type="ECO:0000250" key="4">
    <source>
        <dbReference type="UniProtKB" id="P9WN39"/>
    </source>
</evidence>
<evidence type="ECO:0000255" key="5">
    <source>
        <dbReference type="PROSITE-ProRule" id="PRU01330"/>
    </source>
</evidence>
<evidence type="ECO:0000255" key="6">
    <source>
        <dbReference type="PROSITE-ProRule" id="PRU01331"/>
    </source>
</evidence>
<reference key="1">
    <citation type="journal article" date="1998" name="Nature">
        <title>The complete genome of the hyperthermophilic bacterium Aquifex aeolicus.</title>
        <authorList>
            <person name="Deckert G."/>
            <person name="Warren P.V."/>
            <person name="Gaasterland T."/>
            <person name="Young W.G."/>
            <person name="Lenox A.L."/>
            <person name="Graham D.E."/>
            <person name="Overbeek R."/>
            <person name="Snead M.A."/>
            <person name="Keller M."/>
            <person name="Aujay M."/>
            <person name="Huber R."/>
            <person name="Feldman R.A."/>
            <person name="Short J.M."/>
            <person name="Olsen G.J."/>
            <person name="Swanson R.V."/>
        </authorList>
    </citation>
    <scope>NUCLEOTIDE SEQUENCE [LARGE SCALE GENOMIC DNA]</scope>
    <source>
        <strain>VF5</strain>
    </source>
</reference>
<gene>
    <name evidence="4" type="primary">glnA</name>
    <name type="ordered locus">aq_111</name>
</gene>
<keyword id="KW-0067">ATP-binding</keyword>
<keyword id="KW-0963">Cytoplasm</keyword>
<keyword id="KW-0436">Ligase</keyword>
<keyword id="KW-0460">Magnesium</keyword>
<keyword id="KW-0479">Metal-binding</keyword>
<keyword id="KW-0547">Nucleotide-binding</keyword>
<keyword id="KW-0597">Phosphoprotein</keyword>
<keyword id="KW-1185">Reference proteome</keyword>
<feature type="chain" id="PRO_0000153228" description="Glutamine synthetase">
    <location>
        <begin position="1"/>
        <end position="469"/>
    </location>
</feature>
<feature type="domain" description="GS beta-grasp" evidence="5">
    <location>
        <begin position="16"/>
        <end position="100"/>
    </location>
</feature>
<feature type="domain" description="GS catalytic" evidence="6">
    <location>
        <begin position="108"/>
        <end position="469"/>
    </location>
</feature>
<feature type="binding site" evidence="4">
    <location>
        <position position="133"/>
    </location>
    <ligand>
        <name>Mg(2+)</name>
        <dbReference type="ChEBI" id="CHEBI:18420"/>
        <label>1</label>
    </ligand>
</feature>
<feature type="binding site" evidence="4">
    <location>
        <position position="135"/>
    </location>
    <ligand>
        <name>Mg(2+)</name>
        <dbReference type="ChEBI" id="CHEBI:18420"/>
        <label>2</label>
    </ligand>
</feature>
<feature type="binding site" evidence="4">
    <location>
        <position position="207"/>
    </location>
    <ligand>
        <name>ATP</name>
        <dbReference type="ChEBI" id="CHEBI:30616"/>
    </ligand>
</feature>
<feature type="binding site" evidence="4">
    <location>
        <position position="212"/>
    </location>
    <ligand>
        <name>Mg(2+)</name>
        <dbReference type="ChEBI" id="CHEBI:18420"/>
        <label>2</label>
    </ligand>
</feature>
<feature type="binding site" evidence="4">
    <location>
        <position position="220"/>
    </location>
    <ligand>
        <name>Mg(2+)</name>
        <dbReference type="ChEBI" id="CHEBI:18420"/>
        <label>2</label>
    </ligand>
</feature>
<feature type="binding site" evidence="4">
    <location>
        <begin position="264"/>
        <end position="265"/>
    </location>
    <ligand>
        <name>L-glutamate</name>
        <dbReference type="ChEBI" id="CHEBI:29985"/>
    </ligand>
</feature>
<feature type="binding site" evidence="2">
    <location>
        <position position="265"/>
    </location>
    <ligand>
        <name>L-glutamate</name>
        <dbReference type="ChEBI" id="CHEBI:29985"/>
    </ligand>
</feature>
<feature type="binding site" evidence="4">
    <location>
        <position position="269"/>
    </location>
    <ligand>
        <name>Mg(2+)</name>
        <dbReference type="ChEBI" id="CHEBI:18420"/>
        <label>1</label>
    </ligand>
</feature>
<feature type="binding site" evidence="4">
    <location>
        <begin position="271"/>
        <end position="273"/>
    </location>
    <ligand>
        <name>ATP</name>
        <dbReference type="ChEBI" id="CHEBI:30616"/>
    </ligand>
</feature>
<feature type="binding site" evidence="3">
    <location>
        <position position="273"/>
    </location>
    <ligand>
        <name>ATP</name>
        <dbReference type="ChEBI" id="CHEBI:30616"/>
    </ligand>
</feature>
<feature type="binding site" evidence="4">
    <location>
        <position position="321"/>
    </location>
    <ligand>
        <name>L-glutamate</name>
        <dbReference type="ChEBI" id="CHEBI:29985"/>
    </ligand>
</feature>
<feature type="binding site" evidence="1">
    <location>
        <position position="327"/>
    </location>
    <ligand>
        <name>L-glutamate</name>
        <dbReference type="ChEBI" id="CHEBI:29985"/>
    </ligand>
</feature>
<feature type="binding site" evidence="4">
    <location>
        <position position="339"/>
    </location>
    <ligand>
        <name>ATP</name>
        <dbReference type="ChEBI" id="CHEBI:30616"/>
    </ligand>
</feature>
<feature type="binding site" evidence="4">
    <location>
        <position position="339"/>
    </location>
    <ligand>
        <name>L-glutamate</name>
        <dbReference type="ChEBI" id="CHEBI:29985"/>
    </ligand>
</feature>
<feature type="binding site" evidence="4">
    <location>
        <position position="344"/>
    </location>
    <ligand>
        <name>ATP</name>
        <dbReference type="ChEBI" id="CHEBI:30616"/>
    </ligand>
</feature>
<feature type="binding site" evidence="3">
    <location>
        <position position="353"/>
    </location>
    <ligand>
        <name>ATP</name>
        <dbReference type="ChEBI" id="CHEBI:30616"/>
    </ligand>
</feature>
<feature type="binding site" evidence="4">
    <location>
        <position position="358"/>
    </location>
    <ligand>
        <name>Mg(2+)</name>
        <dbReference type="ChEBI" id="CHEBI:18420"/>
        <label>1</label>
    </ligand>
</feature>
<feature type="binding site" evidence="4">
    <location>
        <position position="360"/>
    </location>
    <ligand>
        <name>L-glutamate</name>
        <dbReference type="ChEBI" id="CHEBI:29985"/>
    </ligand>
</feature>
<feature type="modified residue" description="O-AMP-tyrosine" evidence="4">
    <location>
        <position position="398"/>
    </location>
</feature>
<comment type="function">
    <text evidence="4">Catalyzes the ATP-dependent biosynthesis of glutamine from glutamate and ammonia.</text>
</comment>
<comment type="catalytic activity">
    <reaction evidence="4">
        <text>L-glutamate + NH4(+) + ATP = L-glutamine + ADP + phosphate + H(+)</text>
        <dbReference type="Rhea" id="RHEA:16169"/>
        <dbReference type="ChEBI" id="CHEBI:15378"/>
        <dbReference type="ChEBI" id="CHEBI:28938"/>
        <dbReference type="ChEBI" id="CHEBI:29985"/>
        <dbReference type="ChEBI" id="CHEBI:30616"/>
        <dbReference type="ChEBI" id="CHEBI:43474"/>
        <dbReference type="ChEBI" id="CHEBI:58359"/>
        <dbReference type="ChEBI" id="CHEBI:456216"/>
        <dbReference type="EC" id="6.3.1.2"/>
    </reaction>
</comment>
<comment type="cofactor">
    <cofactor evidence="4">
        <name>Mg(2+)</name>
        <dbReference type="ChEBI" id="CHEBI:18420"/>
    </cofactor>
    <text evidence="4">Binds 2 Mg(2+) ions per subunit.</text>
</comment>
<comment type="activity regulation">
    <text evidence="4">The activity of this enzyme could be controlled by adenylation under conditions of abundant glutamine.</text>
</comment>
<comment type="subunit">
    <text evidence="4">Oligomer of 12 subunits arranged in the form of two hexagons.</text>
</comment>
<comment type="subcellular location">
    <subcellularLocation>
        <location evidence="4">Cytoplasm</location>
    </subcellularLocation>
</comment>
<comment type="similarity">
    <text evidence="4">Belongs to the glutamine synthetase family.</text>
</comment>
<organism>
    <name type="scientific">Aquifex aeolicus (strain VF5)</name>
    <dbReference type="NCBI Taxonomy" id="224324"/>
    <lineage>
        <taxon>Bacteria</taxon>
        <taxon>Pseudomonadati</taxon>
        <taxon>Aquificota</taxon>
        <taxon>Aquificia</taxon>
        <taxon>Aquificales</taxon>
        <taxon>Aquificaceae</taxon>
        <taxon>Aquifex</taxon>
    </lineage>
</organism>
<protein>
    <recommendedName>
        <fullName evidence="4">Glutamine synthetase</fullName>
        <shortName evidence="4">GS</shortName>
        <ecNumber evidence="4">6.3.1.2</ecNumber>
    </recommendedName>
    <alternativeName>
        <fullName evidence="4">Glutamate--ammonia ligase</fullName>
    </alternativeName>
    <alternativeName>
        <fullName evidence="4">Glutamine synthetase I beta</fullName>
        <shortName evidence="4">GSI beta</shortName>
    </alternativeName>
</protein>
<sequence>MPKYTPEEVLDLIQKEGVQYVDLRFSDPFGQWQHLTIPAYEISKETFEVGRGFDGSSIRGWQSINESDMLAKPDPNTAFIDPFIEPKTLVMICDIYDPVTGERYGRDTRYIAQKAEQYLKQTGIGDTAYFGPEAEFFIFDSVEFGTAANYAFWRVDSEEGWWNREVPSSGYKIPHKRGYFPAPPVDKMMQLRNEMVSIMSDLGIIVELHHHEVATAGQGEIDIRYDSLLNQADKLFLYKYIVRMVAAKHGKYATFMAKVLPNDNGSGMHTHFSIWKNGENLFAGSEYAGLSKTALYAIGGILKHGPAIAAFTNPTVNSYHRLVPGYEAPVRLAYSARNRSAAIRIPMYSQNPKAKRIEVRFPDATSNPYLAFAAILMAAIDGIENEIDPGEPFDKDIYSLPPEELEGIPQLPGSLEEALKALEEDYEFLLKGNVFTEEFIQLWIESKRAEIDELRFIPHPKEFELYWDI</sequence>
<accession>O66514</accession>